<accession>P31094</accession>
<accession>Q31QE0</accession>
<evidence type="ECO:0000255" key="1">
    <source>
        <dbReference type="HAMAP-Rule" id="MF_01495"/>
    </source>
</evidence>
<gene>
    <name evidence="1" type="primary">psbB</name>
    <name type="ordered locus">Synpcc7942_0697</name>
</gene>
<reference key="1">
    <citation type="journal article" date="1993" name="Biochim. Biophys. Acta">
        <title>Nucleotide sequence of psbB from Synechococcus sp. strain PCC 7942.</title>
        <authorList>
            <person name="Kulkarni R.D."/>
            <person name="Mueller U.W."/>
            <person name="Golden S.S."/>
        </authorList>
    </citation>
    <scope>NUCLEOTIDE SEQUENCE [GENOMIC DNA]</scope>
</reference>
<reference key="2">
    <citation type="submission" date="2005-08" db="EMBL/GenBank/DDBJ databases">
        <title>Complete sequence of chromosome 1 of Synechococcus elongatus PCC 7942.</title>
        <authorList>
            <consortium name="US DOE Joint Genome Institute"/>
            <person name="Copeland A."/>
            <person name="Lucas S."/>
            <person name="Lapidus A."/>
            <person name="Barry K."/>
            <person name="Detter J.C."/>
            <person name="Glavina T."/>
            <person name="Hammon N."/>
            <person name="Israni S."/>
            <person name="Pitluck S."/>
            <person name="Schmutz J."/>
            <person name="Larimer F."/>
            <person name="Land M."/>
            <person name="Kyrpides N."/>
            <person name="Lykidis A."/>
            <person name="Golden S."/>
            <person name="Richardson P."/>
        </authorList>
    </citation>
    <scope>NUCLEOTIDE SEQUENCE [LARGE SCALE GENOMIC DNA]</scope>
    <source>
        <strain>ATCC 33912 / PCC 7942 / FACHB-805</strain>
    </source>
</reference>
<protein>
    <recommendedName>
        <fullName evidence="1">Photosystem II CP47 reaction center protein</fullName>
    </recommendedName>
    <alternativeName>
        <fullName evidence="1">PSII 47 kDa protein</fullName>
    </alternativeName>
    <alternativeName>
        <fullName evidence="1">Protein CP-47</fullName>
    </alternativeName>
</protein>
<keyword id="KW-0148">Chlorophyll</keyword>
<keyword id="KW-0157">Chromophore</keyword>
<keyword id="KW-0472">Membrane</keyword>
<keyword id="KW-0602">Photosynthesis</keyword>
<keyword id="KW-0604">Photosystem II</keyword>
<keyword id="KW-1185">Reference proteome</keyword>
<keyword id="KW-0793">Thylakoid</keyword>
<keyword id="KW-0812">Transmembrane</keyword>
<keyword id="KW-1133">Transmembrane helix</keyword>
<feature type="chain" id="PRO_0000077503" description="Photosystem II CP47 reaction center protein">
    <location>
        <begin position="1"/>
        <end position="508"/>
    </location>
</feature>
<feature type="transmembrane region" description="Helical" evidence="1">
    <location>
        <begin position="21"/>
        <end position="36"/>
    </location>
</feature>
<feature type="transmembrane region" description="Helical" evidence="1">
    <location>
        <begin position="101"/>
        <end position="115"/>
    </location>
</feature>
<feature type="transmembrane region" description="Helical" evidence="1">
    <location>
        <begin position="140"/>
        <end position="156"/>
    </location>
</feature>
<feature type="transmembrane region" description="Helical" evidence="1">
    <location>
        <begin position="203"/>
        <end position="218"/>
    </location>
</feature>
<feature type="transmembrane region" description="Helical" evidence="1">
    <location>
        <begin position="237"/>
        <end position="252"/>
    </location>
</feature>
<feature type="transmembrane region" description="Helical" evidence="1">
    <location>
        <begin position="457"/>
        <end position="472"/>
    </location>
</feature>
<dbReference type="EMBL" id="Z14087">
    <property type="protein sequence ID" value="CAA78465.1"/>
    <property type="molecule type" value="Genomic_DNA"/>
</dbReference>
<dbReference type="EMBL" id="CP000100">
    <property type="protein sequence ID" value="ABB56729.1"/>
    <property type="molecule type" value="Genomic_DNA"/>
</dbReference>
<dbReference type="PIR" id="S33774">
    <property type="entry name" value="S33774"/>
</dbReference>
<dbReference type="RefSeq" id="WP_011243145.1">
    <property type="nucleotide sequence ID" value="NZ_JACJTX010000005.1"/>
</dbReference>
<dbReference type="SMR" id="P31094"/>
<dbReference type="STRING" id="1140.Synpcc7942_0697"/>
<dbReference type="PaxDb" id="1140-Synpcc7942_0697"/>
<dbReference type="GeneID" id="72429531"/>
<dbReference type="KEGG" id="syf:Synpcc7942_0697"/>
<dbReference type="eggNOG" id="ENOG502Z7TN">
    <property type="taxonomic scope" value="Bacteria"/>
</dbReference>
<dbReference type="HOGENOM" id="CLU_028227_2_0_3"/>
<dbReference type="OrthoDB" id="501837at2"/>
<dbReference type="BioCyc" id="MetaCyc:SYNPCC7942_0697-MONOMER"/>
<dbReference type="BioCyc" id="SYNEL:SYNPCC7942_0697-MONOMER"/>
<dbReference type="Proteomes" id="UP000889800">
    <property type="component" value="Chromosome"/>
</dbReference>
<dbReference type="GO" id="GO:0009523">
    <property type="term" value="C:photosystem II"/>
    <property type="evidence" value="ECO:0007669"/>
    <property type="project" value="UniProtKB-KW"/>
</dbReference>
<dbReference type="GO" id="GO:0031676">
    <property type="term" value="C:plasma membrane-derived thylakoid membrane"/>
    <property type="evidence" value="ECO:0007669"/>
    <property type="project" value="UniProtKB-SubCell"/>
</dbReference>
<dbReference type="GO" id="GO:0016168">
    <property type="term" value="F:chlorophyll binding"/>
    <property type="evidence" value="ECO:0007669"/>
    <property type="project" value="UniProtKB-UniRule"/>
</dbReference>
<dbReference type="GO" id="GO:0045156">
    <property type="term" value="F:electron transporter, transferring electrons within the cyclic electron transport pathway of photosynthesis activity"/>
    <property type="evidence" value="ECO:0007669"/>
    <property type="project" value="InterPro"/>
</dbReference>
<dbReference type="GO" id="GO:0009772">
    <property type="term" value="P:photosynthetic electron transport in photosystem II"/>
    <property type="evidence" value="ECO:0007669"/>
    <property type="project" value="InterPro"/>
</dbReference>
<dbReference type="Gene3D" id="3.10.680.10">
    <property type="entry name" value="Photosystem II CP47 reaction center protein"/>
    <property type="match status" value="1"/>
</dbReference>
<dbReference type="HAMAP" id="MF_01495">
    <property type="entry name" value="PSII_PsbB_CP47"/>
    <property type="match status" value="1"/>
</dbReference>
<dbReference type="InterPro" id="IPR000932">
    <property type="entry name" value="PS_antenna-like"/>
</dbReference>
<dbReference type="InterPro" id="IPR036001">
    <property type="entry name" value="PS_II_antenna-like_sf"/>
</dbReference>
<dbReference type="InterPro" id="IPR017486">
    <property type="entry name" value="PSII_PsbB"/>
</dbReference>
<dbReference type="NCBIfam" id="TIGR03039">
    <property type="entry name" value="PS_II_CP47"/>
    <property type="match status" value="1"/>
</dbReference>
<dbReference type="Pfam" id="PF00421">
    <property type="entry name" value="PSII"/>
    <property type="match status" value="1"/>
</dbReference>
<dbReference type="SUPFAM" id="SSF161077">
    <property type="entry name" value="Photosystem II antenna protein-like"/>
    <property type="match status" value="1"/>
</dbReference>
<name>PSBB_SYNE7</name>
<organism>
    <name type="scientific">Synechococcus elongatus (strain ATCC 33912 / PCC 7942 / FACHB-805)</name>
    <name type="common">Anacystis nidulans R2</name>
    <dbReference type="NCBI Taxonomy" id="1140"/>
    <lineage>
        <taxon>Bacteria</taxon>
        <taxon>Bacillati</taxon>
        <taxon>Cyanobacteriota</taxon>
        <taxon>Cyanophyceae</taxon>
        <taxon>Synechococcales</taxon>
        <taxon>Synechococcaceae</taxon>
        <taxon>Synechococcus</taxon>
    </lineage>
</organism>
<proteinExistence type="inferred from homology"/>
<sequence>MGLPWYRVHTVVLNDPGRLIAVHLMHTALVAGWAGSMALYELAIFDPSDAVLNPMWRQGMFVLPFMARLGVTQSWGGWSITGETAVDPGYWSFEGVAIAHIVLSGLLFLAAVWHWVYWDLELFTDPRTGEPALDLPKMFGIHLFLSGLLCFGFGAFHLSGLWGPGMWVSDPYGLTGHVQPVAPAWGPEGFNPFNPGGIVAHHIAAGVVGIVAGLFHLTVRPPERLYKALRMGNIETVLSSSLAAVFFAAFVVAGTMWYGNAATPVELFGPTRYQWDQGYFRQEIARRVDTAVASGASLEEAWSSIPEKLAFYDYVGNSPAKGGLFRTGQMNKGDGIAQGWLGHAVFKDKNGDVLDVRRLPNFFENFPIVLTDSKGAVRADIPFRRAEAKFSFEETGITASFYGGSLNGQTITDPAQVKKYARKAQLGEAFEFDTETLNSDGVFRTSPRGWFTFGHASFALLFFFGHIWHGSRTLFRDVFAGIEADLGEQIEFGAFQKLGDPTTRKTAA</sequence>
<comment type="function">
    <text evidence="1">One of the components of the core complex of photosystem II (PSII). It binds chlorophyll and helps catalyze the primary light-induced photochemical processes of PSII. PSII is a light-driven water:plastoquinone oxidoreductase, using light energy to abstract electrons from H(2)O, generating O(2) and a proton gradient subsequently used for ATP formation.</text>
</comment>
<comment type="cofactor">
    <text evidence="1">Binds multiple chlorophylls. PSII binds additional chlorophylls, carotenoids and specific lipids.</text>
</comment>
<comment type="subunit">
    <text evidence="1">PSII is composed of 1 copy each of membrane proteins PsbA, PsbB, PsbC, PsbD, PsbE, PsbF, PsbH, PsbI, PsbJ, PsbK, PsbL, PsbM, PsbT, PsbX, PsbY, PsbZ, Psb30/Ycf12, peripheral proteins PsbO, CyanoQ (PsbQ), PsbU, PsbV and a large number of cofactors. It forms dimeric complexes.</text>
</comment>
<comment type="subcellular location">
    <subcellularLocation>
        <location evidence="1">Cellular thylakoid membrane</location>
        <topology evidence="1">Multi-pass membrane protein</topology>
    </subcellularLocation>
</comment>
<comment type="similarity">
    <text evidence="1">Belongs to the PsbB/PsbC family. PsbB subfamily.</text>
</comment>